<evidence type="ECO:0000255" key="1">
    <source>
        <dbReference type="HAMAP-Rule" id="MF_00501"/>
    </source>
</evidence>
<evidence type="ECO:0000305" key="2"/>
<gene>
    <name evidence="1" type="primary">rpmE</name>
    <name type="ordered locus">CPF_2469</name>
</gene>
<protein>
    <recommendedName>
        <fullName evidence="1">Large ribosomal subunit protein bL31</fullName>
    </recommendedName>
    <alternativeName>
        <fullName evidence="2">50S ribosomal protein L31</fullName>
    </alternativeName>
</protein>
<sequence>MRQGIHPEYHHDTVVKCACGNTFTTGSVKPELKVEICSKCHPFFTGKQKIVDVGGRVDKFNKRFNLNK</sequence>
<name>RL31_CLOP1</name>
<accession>Q0TNA7</accession>
<reference key="1">
    <citation type="journal article" date="2006" name="Genome Res.">
        <title>Skewed genomic variability in strains of the toxigenic bacterial pathogen, Clostridium perfringens.</title>
        <authorList>
            <person name="Myers G.S.A."/>
            <person name="Rasko D.A."/>
            <person name="Cheung J.K."/>
            <person name="Ravel J."/>
            <person name="Seshadri R."/>
            <person name="DeBoy R.T."/>
            <person name="Ren Q."/>
            <person name="Varga J."/>
            <person name="Awad M.M."/>
            <person name="Brinkac L.M."/>
            <person name="Daugherty S.C."/>
            <person name="Haft D.H."/>
            <person name="Dodson R.J."/>
            <person name="Madupu R."/>
            <person name="Nelson W.C."/>
            <person name="Rosovitz M.J."/>
            <person name="Sullivan S.A."/>
            <person name="Khouri H."/>
            <person name="Dimitrov G.I."/>
            <person name="Watkins K.L."/>
            <person name="Mulligan S."/>
            <person name="Benton J."/>
            <person name="Radune D."/>
            <person name="Fisher D.J."/>
            <person name="Atkins H.S."/>
            <person name="Hiscox T."/>
            <person name="Jost B.H."/>
            <person name="Billington S.J."/>
            <person name="Songer J.G."/>
            <person name="McClane B.A."/>
            <person name="Titball R.W."/>
            <person name="Rood J.I."/>
            <person name="Melville S.B."/>
            <person name="Paulsen I.T."/>
        </authorList>
    </citation>
    <scope>NUCLEOTIDE SEQUENCE [LARGE SCALE GENOMIC DNA]</scope>
    <source>
        <strain>ATCC 13124 / DSM 756 / JCM 1290 / NCIMB 6125 / NCTC 8237 / S 107 / Type A</strain>
    </source>
</reference>
<comment type="function">
    <text evidence="1">Binds the 23S rRNA.</text>
</comment>
<comment type="cofactor">
    <cofactor evidence="1">
        <name>Zn(2+)</name>
        <dbReference type="ChEBI" id="CHEBI:29105"/>
    </cofactor>
    <text evidence="1">Binds 1 zinc ion per subunit.</text>
</comment>
<comment type="subunit">
    <text evidence="1">Part of the 50S ribosomal subunit.</text>
</comment>
<comment type="similarity">
    <text evidence="1">Belongs to the bacterial ribosomal protein bL31 family. Type A subfamily.</text>
</comment>
<dbReference type="EMBL" id="CP000246">
    <property type="protein sequence ID" value="ABG84890.1"/>
    <property type="molecule type" value="Genomic_DNA"/>
</dbReference>
<dbReference type="RefSeq" id="WP_003452406.1">
    <property type="nucleotide sequence ID" value="NC_008261.1"/>
</dbReference>
<dbReference type="SMR" id="Q0TNA7"/>
<dbReference type="STRING" id="195103.CPF_2469"/>
<dbReference type="PaxDb" id="195103-CPF_2469"/>
<dbReference type="GeneID" id="93001253"/>
<dbReference type="KEGG" id="cpf:CPF_2469"/>
<dbReference type="eggNOG" id="COG0254">
    <property type="taxonomic scope" value="Bacteria"/>
</dbReference>
<dbReference type="HOGENOM" id="CLU_114306_4_3_9"/>
<dbReference type="Proteomes" id="UP000001823">
    <property type="component" value="Chromosome"/>
</dbReference>
<dbReference type="GO" id="GO:1990904">
    <property type="term" value="C:ribonucleoprotein complex"/>
    <property type="evidence" value="ECO:0007669"/>
    <property type="project" value="UniProtKB-KW"/>
</dbReference>
<dbReference type="GO" id="GO:0005840">
    <property type="term" value="C:ribosome"/>
    <property type="evidence" value="ECO:0007669"/>
    <property type="project" value="UniProtKB-KW"/>
</dbReference>
<dbReference type="GO" id="GO:0046872">
    <property type="term" value="F:metal ion binding"/>
    <property type="evidence" value="ECO:0007669"/>
    <property type="project" value="UniProtKB-KW"/>
</dbReference>
<dbReference type="GO" id="GO:0019843">
    <property type="term" value="F:rRNA binding"/>
    <property type="evidence" value="ECO:0007669"/>
    <property type="project" value="UniProtKB-KW"/>
</dbReference>
<dbReference type="GO" id="GO:0003735">
    <property type="term" value="F:structural constituent of ribosome"/>
    <property type="evidence" value="ECO:0007669"/>
    <property type="project" value="InterPro"/>
</dbReference>
<dbReference type="GO" id="GO:0006412">
    <property type="term" value="P:translation"/>
    <property type="evidence" value="ECO:0007669"/>
    <property type="project" value="UniProtKB-UniRule"/>
</dbReference>
<dbReference type="Gene3D" id="4.10.830.30">
    <property type="entry name" value="Ribosomal protein L31"/>
    <property type="match status" value="1"/>
</dbReference>
<dbReference type="HAMAP" id="MF_00501">
    <property type="entry name" value="Ribosomal_bL31_1"/>
    <property type="match status" value="1"/>
</dbReference>
<dbReference type="InterPro" id="IPR034704">
    <property type="entry name" value="Ribosomal_bL28/bL31-like_sf"/>
</dbReference>
<dbReference type="InterPro" id="IPR002150">
    <property type="entry name" value="Ribosomal_bL31"/>
</dbReference>
<dbReference type="InterPro" id="IPR027491">
    <property type="entry name" value="Ribosomal_bL31_A"/>
</dbReference>
<dbReference type="InterPro" id="IPR042105">
    <property type="entry name" value="Ribosomal_bL31_sf"/>
</dbReference>
<dbReference type="NCBIfam" id="TIGR00105">
    <property type="entry name" value="L31"/>
    <property type="match status" value="1"/>
</dbReference>
<dbReference type="NCBIfam" id="NF000612">
    <property type="entry name" value="PRK00019.1"/>
    <property type="match status" value="1"/>
</dbReference>
<dbReference type="NCBIfam" id="NF001809">
    <property type="entry name" value="PRK00528.1"/>
    <property type="match status" value="1"/>
</dbReference>
<dbReference type="PANTHER" id="PTHR33280">
    <property type="entry name" value="50S RIBOSOMAL PROTEIN L31, CHLOROPLASTIC"/>
    <property type="match status" value="1"/>
</dbReference>
<dbReference type="PANTHER" id="PTHR33280:SF1">
    <property type="entry name" value="LARGE RIBOSOMAL SUBUNIT PROTEIN BL31C"/>
    <property type="match status" value="1"/>
</dbReference>
<dbReference type="Pfam" id="PF01197">
    <property type="entry name" value="Ribosomal_L31"/>
    <property type="match status" value="1"/>
</dbReference>
<dbReference type="PRINTS" id="PR01249">
    <property type="entry name" value="RIBOSOMALL31"/>
</dbReference>
<dbReference type="SUPFAM" id="SSF143800">
    <property type="entry name" value="L28p-like"/>
    <property type="match status" value="1"/>
</dbReference>
<dbReference type="PROSITE" id="PS01143">
    <property type="entry name" value="RIBOSOMAL_L31"/>
    <property type="match status" value="1"/>
</dbReference>
<organism>
    <name type="scientific">Clostridium perfringens (strain ATCC 13124 / DSM 756 / JCM 1290 / NCIMB 6125 / NCTC 8237 / Type A)</name>
    <dbReference type="NCBI Taxonomy" id="195103"/>
    <lineage>
        <taxon>Bacteria</taxon>
        <taxon>Bacillati</taxon>
        <taxon>Bacillota</taxon>
        <taxon>Clostridia</taxon>
        <taxon>Eubacteriales</taxon>
        <taxon>Clostridiaceae</taxon>
        <taxon>Clostridium</taxon>
    </lineage>
</organism>
<proteinExistence type="inferred from homology"/>
<feature type="chain" id="PRO_0000259176" description="Large ribosomal subunit protein bL31">
    <location>
        <begin position="1"/>
        <end position="68"/>
    </location>
</feature>
<feature type="binding site" evidence="1">
    <location>
        <position position="17"/>
    </location>
    <ligand>
        <name>Zn(2+)</name>
        <dbReference type="ChEBI" id="CHEBI:29105"/>
    </ligand>
</feature>
<feature type="binding site" evidence="1">
    <location>
        <position position="19"/>
    </location>
    <ligand>
        <name>Zn(2+)</name>
        <dbReference type="ChEBI" id="CHEBI:29105"/>
    </ligand>
</feature>
<feature type="binding site" evidence="1">
    <location>
        <position position="37"/>
    </location>
    <ligand>
        <name>Zn(2+)</name>
        <dbReference type="ChEBI" id="CHEBI:29105"/>
    </ligand>
</feature>
<feature type="binding site" evidence="1">
    <location>
        <position position="40"/>
    </location>
    <ligand>
        <name>Zn(2+)</name>
        <dbReference type="ChEBI" id="CHEBI:29105"/>
    </ligand>
</feature>
<keyword id="KW-0479">Metal-binding</keyword>
<keyword id="KW-0687">Ribonucleoprotein</keyword>
<keyword id="KW-0689">Ribosomal protein</keyword>
<keyword id="KW-0694">RNA-binding</keyword>
<keyword id="KW-0699">rRNA-binding</keyword>
<keyword id="KW-0862">Zinc</keyword>